<accession>Q895G3</accession>
<proteinExistence type="inferred from homology"/>
<name>SPEH_CLOTE</name>
<protein>
    <recommendedName>
        <fullName evidence="1">S-adenosylmethionine decarboxylase proenzyme</fullName>
        <shortName evidence="1">AdoMetDC</shortName>
        <shortName evidence="1">SAMDC</shortName>
        <ecNumber evidence="1">4.1.1.50</ecNumber>
    </recommendedName>
    <component>
        <recommendedName>
            <fullName evidence="1">S-adenosylmethionine decarboxylase beta chain</fullName>
        </recommendedName>
    </component>
    <component>
        <recommendedName>
            <fullName evidence="1">S-adenosylmethionine decarboxylase alpha chain</fullName>
        </recommendedName>
    </component>
</protein>
<evidence type="ECO:0000255" key="1">
    <source>
        <dbReference type="HAMAP-Rule" id="MF_00464"/>
    </source>
</evidence>
<comment type="function">
    <text evidence="1">Catalyzes the decarboxylation of S-adenosylmethionine to S-adenosylmethioninamine (dcAdoMet), the propylamine donor required for the synthesis of the polyamines spermine and spermidine from the diamine putrescine.</text>
</comment>
<comment type="catalytic activity">
    <reaction evidence="1">
        <text>S-adenosyl-L-methionine + H(+) = S-adenosyl 3-(methylsulfanyl)propylamine + CO2</text>
        <dbReference type="Rhea" id="RHEA:15981"/>
        <dbReference type="ChEBI" id="CHEBI:15378"/>
        <dbReference type="ChEBI" id="CHEBI:16526"/>
        <dbReference type="ChEBI" id="CHEBI:57443"/>
        <dbReference type="ChEBI" id="CHEBI:59789"/>
        <dbReference type="EC" id="4.1.1.50"/>
    </reaction>
</comment>
<comment type="cofactor">
    <cofactor evidence="1">
        <name>pyruvate</name>
        <dbReference type="ChEBI" id="CHEBI:15361"/>
    </cofactor>
    <text evidence="1">Binds 1 pyruvoyl group covalently per subunit.</text>
</comment>
<comment type="pathway">
    <text evidence="1">Amine and polyamine biosynthesis; S-adenosylmethioninamine biosynthesis; S-adenosylmethioninamine from S-adenosyl-L-methionine: step 1/1.</text>
</comment>
<comment type="subunit">
    <text evidence="1">Heterotetramer of two alpha and two beta chains arranged as a dimer of alpha/beta heterodimers.</text>
</comment>
<comment type="PTM">
    <text evidence="1">Is synthesized initially as an inactive proenzyme. Formation of the active enzyme involves a self-maturation process in which the active site pyruvoyl group is generated from an internal serine residue via an autocatalytic post-translational modification. Two non-identical subunits are generated from the proenzyme in this reaction, and the pyruvate is formed at the N-terminus of the alpha chain, which is derived from the carboxyl end of the proenzyme. The post-translation cleavage follows an unusual pathway, termed non-hydrolytic serinolysis, in which the side chain hydroxyl group of the serine supplies its oxygen atom to form the C-terminus of the beta chain, while the remainder of the serine residue undergoes an oxidative deamination to produce ammonia and the pyruvoyl group blocking the N-terminus of the alpha chain.</text>
</comment>
<comment type="similarity">
    <text evidence="1">Belongs to the prokaryotic AdoMetDC family. Type 1 subfamily.</text>
</comment>
<organism>
    <name type="scientific">Clostridium tetani (strain Massachusetts / E88)</name>
    <dbReference type="NCBI Taxonomy" id="212717"/>
    <lineage>
        <taxon>Bacteria</taxon>
        <taxon>Bacillati</taxon>
        <taxon>Bacillota</taxon>
        <taxon>Clostridia</taxon>
        <taxon>Eubacteriales</taxon>
        <taxon>Clostridiaceae</taxon>
        <taxon>Clostridium</taxon>
    </lineage>
</organism>
<sequence length="126" mass="13996">MNNLGRHILAEIYGCDELILNDKEYIERIMVDSALKSGAEVREVAFHKFSPQGVSGVVIISESHLTIHTWPELGYAAVDVFTCGDRVNPWDACNYMGEKLNAKNITATEVKRGIFEQPVAVKASNE</sequence>
<keyword id="KW-0068">Autocatalytic cleavage</keyword>
<keyword id="KW-0210">Decarboxylase</keyword>
<keyword id="KW-0456">Lyase</keyword>
<keyword id="KW-0620">Polyamine biosynthesis</keyword>
<keyword id="KW-0670">Pyruvate</keyword>
<keyword id="KW-1185">Reference proteome</keyword>
<keyword id="KW-0949">S-adenosyl-L-methionine</keyword>
<keyword id="KW-0704">Schiff base</keyword>
<keyword id="KW-0745">Spermidine biosynthesis</keyword>
<keyword id="KW-0865">Zymogen</keyword>
<reference key="1">
    <citation type="journal article" date="2003" name="Proc. Natl. Acad. Sci. U.S.A.">
        <title>The genome sequence of Clostridium tetani, the causative agent of tetanus disease.</title>
        <authorList>
            <person name="Brueggemann H."/>
            <person name="Baeumer S."/>
            <person name="Fricke W.F."/>
            <person name="Wiezer A."/>
            <person name="Liesegang H."/>
            <person name="Decker I."/>
            <person name="Herzberg C."/>
            <person name="Martinez-Arias R."/>
            <person name="Merkl R."/>
            <person name="Henne A."/>
            <person name="Gottschalk G."/>
        </authorList>
    </citation>
    <scope>NUCLEOTIDE SEQUENCE [LARGE SCALE GENOMIC DNA]</scope>
    <source>
        <strain>Massachusetts / E88</strain>
    </source>
</reference>
<gene>
    <name evidence="1" type="primary">speH</name>
    <name type="ordered locus">CTC_01312</name>
</gene>
<feature type="chain" id="PRO_0000030103" description="S-adenosylmethionine decarboxylase beta chain" evidence="1">
    <location>
        <begin position="1"/>
        <end position="62"/>
    </location>
</feature>
<feature type="chain" id="PRO_0000030104" description="S-adenosylmethionine decarboxylase alpha chain" evidence="1">
    <location>
        <begin position="63"/>
        <end position="126"/>
    </location>
</feature>
<feature type="active site" description="Schiff-base intermediate with substrate; via pyruvic acid" evidence="1">
    <location>
        <position position="63"/>
    </location>
</feature>
<feature type="active site" description="Proton acceptor; for processing activity" evidence="1">
    <location>
        <position position="68"/>
    </location>
</feature>
<feature type="active site" description="Proton donor; for catalytic activity" evidence="1">
    <location>
        <position position="83"/>
    </location>
</feature>
<feature type="site" description="Cleavage (non-hydrolytic); by autolysis" evidence="1">
    <location>
        <begin position="62"/>
        <end position="63"/>
    </location>
</feature>
<feature type="modified residue" description="Pyruvic acid (Ser); by autocatalysis" evidence="1">
    <location>
        <position position="63"/>
    </location>
</feature>
<dbReference type="EC" id="4.1.1.50" evidence="1"/>
<dbReference type="EMBL" id="AE015927">
    <property type="protein sequence ID" value="AAO35877.1"/>
    <property type="molecule type" value="Genomic_DNA"/>
</dbReference>
<dbReference type="SMR" id="Q895G3"/>
<dbReference type="STRING" id="212717.CTC_01312"/>
<dbReference type="GeneID" id="24255169"/>
<dbReference type="KEGG" id="ctc:CTC_01312"/>
<dbReference type="HOGENOM" id="CLU_125470_2_3_9"/>
<dbReference type="OrthoDB" id="9793120at2"/>
<dbReference type="UniPathway" id="UPA00331">
    <property type="reaction ID" value="UER00451"/>
</dbReference>
<dbReference type="Proteomes" id="UP000001412">
    <property type="component" value="Chromosome"/>
</dbReference>
<dbReference type="GO" id="GO:0005829">
    <property type="term" value="C:cytosol"/>
    <property type="evidence" value="ECO:0007669"/>
    <property type="project" value="TreeGrafter"/>
</dbReference>
<dbReference type="GO" id="GO:0004014">
    <property type="term" value="F:adenosylmethionine decarboxylase activity"/>
    <property type="evidence" value="ECO:0007669"/>
    <property type="project" value="UniProtKB-UniRule"/>
</dbReference>
<dbReference type="GO" id="GO:0008295">
    <property type="term" value="P:spermidine biosynthetic process"/>
    <property type="evidence" value="ECO:0007669"/>
    <property type="project" value="UniProtKB-UniRule"/>
</dbReference>
<dbReference type="FunFam" id="3.30.360.110:FF:000001">
    <property type="entry name" value="S-adenosylmethionine decarboxylase proenzyme"/>
    <property type="match status" value="1"/>
</dbReference>
<dbReference type="Gene3D" id="3.30.160.750">
    <property type="match status" value="1"/>
</dbReference>
<dbReference type="Gene3D" id="3.30.360.110">
    <property type="entry name" value="S-adenosylmethionine decarboxylase domain"/>
    <property type="match status" value="1"/>
</dbReference>
<dbReference type="HAMAP" id="MF_00464">
    <property type="entry name" value="AdoMetDC_1"/>
    <property type="match status" value="1"/>
</dbReference>
<dbReference type="InterPro" id="IPR042286">
    <property type="entry name" value="AdoMetDC_C"/>
</dbReference>
<dbReference type="InterPro" id="IPR003826">
    <property type="entry name" value="AdoMetDC_fam_prok"/>
</dbReference>
<dbReference type="InterPro" id="IPR042284">
    <property type="entry name" value="AdoMetDC_N"/>
</dbReference>
<dbReference type="InterPro" id="IPR016067">
    <property type="entry name" value="S-AdoMet_deCO2ase_core"/>
</dbReference>
<dbReference type="InterPro" id="IPR017716">
    <property type="entry name" value="S-AdoMet_deCOase_pro-enz"/>
</dbReference>
<dbReference type="NCBIfam" id="TIGR03330">
    <property type="entry name" value="SAM_DCase_Bsu"/>
    <property type="match status" value="1"/>
</dbReference>
<dbReference type="PANTHER" id="PTHR33866">
    <property type="entry name" value="S-ADENOSYLMETHIONINE DECARBOXYLASE PROENZYME"/>
    <property type="match status" value="1"/>
</dbReference>
<dbReference type="PANTHER" id="PTHR33866:SF2">
    <property type="entry name" value="S-ADENOSYLMETHIONINE DECARBOXYLASE PROENZYME"/>
    <property type="match status" value="1"/>
</dbReference>
<dbReference type="Pfam" id="PF02675">
    <property type="entry name" value="AdoMet_dc"/>
    <property type="match status" value="1"/>
</dbReference>
<dbReference type="SUPFAM" id="SSF56276">
    <property type="entry name" value="S-adenosylmethionine decarboxylase"/>
    <property type="match status" value="1"/>
</dbReference>